<feature type="signal peptide" evidence="2">
    <location>
        <begin position="1"/>
        <end position="17"/>
    </location>
</feature>
<feature type="chain" id="PRO_0000045799" description="Endosialin">
    <location>
        <begin position="18"/>
        <end position="757"/>
    </location>
</feature>
<feature type="topological domain" description="Extracellular" evidence="2">
    <location>
        <begin position="18"/>
        <end position="687"/>
    </location>
</feature>
<feature type="transmembrane region" description="Helical" evidence="2">
    <location>
        <begin position="688"/>
        <end position="708"/>
    </location>
</feature>
<feature type="topological domain" description="Cytoplasmic" evidence="2">
    <location>
        <begin position="709"/>
        <end position="757"/>
    </location>
</feature>
<feature type="domain" description="C-type lectin" evidence="3">
    <location>
        <begin position="30"/>
        <end position="156"/>
    </location>
</feature>
<feature type="domain" description="Sushi">
    <location>
        <begin position="162"/>
        <end position="232"/>
    </location>
</feature>
<feature type="domain" description="EGF-like; calcium-binding" evidence="2">
    <location>
        <begin position="312"/>
        <end position="351"/>
    </location>
</feature>
<feature type="region of interest" description="Disordered" evidence="4">
    <location>
        <begin position="618"/>
        <end position="662"/>
    </location>
</feature>
<feature type="region of interest" description="Disordered" evidence="4">
    <location>
        <begin position="737"/>
        <end position="757"/>
    </location>
</feature>
<feature type="compositionally biased region" description="Low complexity" evidence="4">
    <location>
        <begin position="618"/>
        <end position="627"/>
    </location>
</feature>
<feature type="compositionally biased region" description="Polar residues" evidence="4">
    <location>
        <begin position="748"/>
        <end position="757"/>
    </location>
</feature>
<feature type="modified residue" description="Phosphoserine" evidence="17">
    <location>
        <position position="746"/>
    </location>
</feature>
<feature type="glycosylation site" description="O-linked (GalNAc...) threonine" evidence="2">
    <location>
        <position position="60"/>
    </location>
</feature>
<feature type="glycosylation site" description="O-linked (GalNAc...) threonine" evidence="2">
    <location>
        <position position="401"/>
    </location>
</feature>
<feature type="glycosylation site" description="O-linked (GalNAc...) threonine" evidence="2">
    <location>
        <position position="428"/>
    </location>
</feature>
<feature type="glycosylation site" description="O-linked (GalNAc...) threonine" evidence="2">
    <location>
        <position position="448"/>
    </location>
</feature>
<feature type="glycosylation site" description="O-linked (GalNAc...) threonine" evidence="2">
    <location>
        <position position="456"/>
    </location>
</feature>
<feature type="glycosylation site" description="O-linked (GalNAc...) threonine" evidence="2">
    <location>
        <position position="459"/>
    </location>
</feature>
<feature type="glycosylation site" description="O-linked (GalNAc...) threonine" evidence="2">
    <location>
        <position position="472"/>
    </location>
</feature>
<feature type="glycosylation site" description="O-linked (GalNAc...) threonine" evidence="2">
    <location>
        <position position="519"/>
    </location>
</feature>
<feature type="glycosylation site" description="O-linked (GalNAc...) threonine" evidence="2">
    <location>
        <position position="541"/>
    </location>
</feature>
<feature type="glycosylation site" description="O-linked (GalNAc...) threonine" evidence="2">
    <location>
        <position position="543"/>
    </location>
</feature>
<feature type="glycosylation site" description="O-linked (GalNAc...) threonine" evidence="2">
    <location>
        <position position="544"/>
    </location>
</feature>
<feature type="glycosylation site" description="O-linked (GalNAc...) threonine" evidence="2">
    <location>
        <position position="545"/>
    </location>
</feature>
<feature type="glycosylation site" description="O-linked (GalNAc...) threonine" evidence="2">
    <location>
        <position position="587"/>
    </location>
</feature>
<feature type="glycosylation site" description="O-linked (GalNAc...) threonine" evidence="2">
    <location>
        <position position="593"/>
    </location>
</feature>
<feature type="glycosylation site" description="O-linked (GalNAc...) threonine" evidence="2">
    <location>
        <position position="594"/>
    </location>
</feature>
<feature type="glycosylation site" description="O-linked (GalNAc...) threonine" evidence="2">
    <location>
        <position position="595"/>
    </location>
</feature>
<feature type="glycosylation site" description="O-linked (GalNAc...) serine" evidence="2">
    <location>
        <position position="598"/>
    </location>
</feature>
<feature type="glycosylation site" description="O-linked (GalNAc...) serine" evidence="2">
    <location>
        <position position="601"/>
    </location>
</feature>
<feature type="glycosylation site" description="O-linked (GalNAc...) threonine" evidence="2">
    <location>
        <position position="612"/>
    </location>
</feature>
<feature type="glycosylation site" description="O-linked (GalNAc...) threonine" evidence="2">
    <location>
        <position position="619"/>
    </location>
</feature>
<feature type="glycosylation site" description="O-linked (GalNAc...) serine" evidence="2">
    <location>
        <position position="623"/>
    </location>
</feature>
<feature type="glycosylation site" description="O-linked (GalNAc...) serine" evidence="2">
    <location>
        <position position="625"/>
    </location>
</feature>
<feature type="glycosylation site" description="O-linked (GalNAc...) threonine" evidence="2">
    <location>
        <position position="627"/>
    </location>
</feature>
<feature type="glycosylation site" description="O-linked (GalNAc...) threonine" evidence="2">
    <location>
        <position position="630"/>
    </location>
</feature>
<feature type="glycosylation site" description="O-linked (GalNAc...) serine" evidence="2">
    <location>
        <position position="631"/>
    </location>
</feature>
<feature type="glycosylation site" description="O-linked (GalNAc...) threonine" evidence="2">
    <location>
        <position position="636"/>
    </location>
</feature>
<feature type="glycosylation site" description="O-linked (GalNAc...) serine" evidence="2">
    <location>
        <position position="640"/>
    </location>
</feature>
<feature type="disulfide bond" evidence="3">
    <location>
        <begin position="131"/>
        <end position="147"/>
    </location>
</feature>
<feature type="disulfide bond" evidence="3">
    <location>
        <begin position="316"/>
        <end position="326"/>
    </location>
</feature>
<feature type="disulfide bond" evidence="3">
    <location>
        <begin position="322"/>
        <end position="335"/>
    </location>
</feature>
<feature type="disulfide bond" evidence="3">
    <location>
        <begin position="337"/>
        <end position="350"/>
    </location>
</feature>
<feature type="splice variant" id="VSP_017087" description="In isoform 2." evidence="15">
    <location>
        <begin position="1"/>
        <end position="324"/>
    </location>
</feature>
<feature type="sequence variant" id="VAR_036399" description="In a colorectal cancer sample; somatic mutation." evidence="11">
    <original>L</original>
    <variation>F</variation>
    <location>
        <position position="6"/>
    </location>
</feature>
<feature type="sequence variant" id="VAR_025013" description="In dbSNP:rs3741367." evidence="8">
    <original>H</original>
    <variation>R</variation>
    <location>
        <position position="457"/>
    </location>
</feature>
<feature type="sequence conflict" description="In Ref. 3; BAB55018." evidence="16" ref="3">
    <original>A</original>
    <variation>V</variation>
    <location>
        <position position="486"/>
    </location>
</feature>
<sequence>MLLRLLLAWAAAGPTLGQDPWAAEPRAACGPSSCYALFPRRRTFLEAWRACRELGGDLATPRTPEEAQRVDSLVGAGPASRLLWIGLQRQARQCQLQRPLRGFTWTTGDQDTAFTNWAQPASGGPCPAQRCVALEASGEHRWLEGSCTLAVDGYLCQFGFEGACPALQDEAGQAGPAVYTTPFHLVSTEFEWLPFGSVAAVQCQAGRGASLLCVKQPEGGVGWSRAGPLCLGTGCSPDNGGCEHECVEEVDGHVSCRCTEGFRLAADGRSCEDPCAQAPCEQQCEPGGPQGYSCHCRLGFRPAEDDPHRCVDTDECQIAGVCQQMCVNYVGGFECYCSEGHELEADGISCSPAGAMGAQASQDLGDELLDDGEDEEDEDEAWKAFNGGWTEMPGILWMEPTQPPDFALAYRPSFPEDREPQIPYPEPTWPPPLSAPRVPYHSSVLSVTRPVVVSATHPTLPSAHQPPVIPATHPALSRDHQIPVIAANYPDLPSAYQPGILSVSHSAQPPAHQPPMISTKYPELFPAHQSPMFPDTRVAGTQTTTHLPGIPPNHAPLVTTLGAQLPPQAPDALVLRTQATQLPIIPTAQPSLTTTSRSPVSPAHQISVPAATQPAALPTLLPSQSPTNQTSPISPTHPHSKAPQIPREDGPSPKLALWLPSPAPTAAPTALGEAGLAEHSQRDDRWLLVALLVPTCVFLVVLLALGIVYCTRCGPHAPNKRITDCYRWVIHAGSKSPTEPMPPRGSLTGVQTCRTSV</sequence>
<evidence type="ECO:0000250" key="1">
    <source>
        <dbReference type="UniProtKB" id="Q91V98"/>
    </source>
</evidence>
<evidence type="ECO:0000255" key="2"/>
<evidence type="ECO:0000255" key="3">
    <source>
        <dbReference type="PROSITE-ProRule" id="PRU00040"/>
    </source>
</evidence>
<evidence type="ECO:0000256" key="4">
    <source>
        <dbReference type="SAM" id="MobiDB-lite"/>
    </source>
</evidence>
<evidence type="ECO:0000269" key="5">
    <source>
    </source>
</evidence>
<evidence type="ECO:0000269" key="6">
    <source>
    </source>
</evidence>
<evidence type="ECO:0000269" key="7">
    <source>
    </source>
</evidence>
<evidence type="ECO:0000269" key="8">
    <source>
    </source>
</evidence>
<evidence type="ECO:0000269" key="9">
    <source>
    </source>
</evidence>
<evidence type="ECO:0000269" key="10">
    <source>
    </source>
</evidence>
<evidence type="ECO:0000269" key="11">
    <source>
    </source>
</evidence>
<evidence type="ECO:0000269" key="12">
    <source>
    </source>
</evidence>
<evidence type="ECO:0000269" key="13">
    <source>
    </source>
</evidence>
<evidence type="ECO:0000269" key="14">
    <source>
    </source>
</evidence>
<evidence type="ECO:0000303" key="15">
    <source>
    </source>
</evidence>
<evidence type="ECO:0000305" key="16"/>
<evidence type="ECO:0007744" key="17">
    <source>
    </source>
</evidence>
<accession>Q9HCU0</accession>
<accession>Q2M2V5</accession>
<accession>Q3SX55</accession>
<accession>Q96KB6</accession>
<comment type="function">
    <text evidence="1 9 12 13 14">Cell surface glycoprotein involved in various biological processes including angiogenesis, immune response modulation, and tissue remodeling and repair. Participates in pericyte proliferation through positive modulation of the PDGF receptor signaling pathway (PubMed:20484976). Acts as a scaffold for factor X, triggering allosteric changes and the spatial re-alignment of factor X with the TF-factor VIIa complex, thereby enhancing coagulation activation. Modulates the insulin signaling pathway by interacting with insulin receptor/INSR and by diminishing its capacity to be autophosphorylated in response to insulin. Also regulates LPS-induced inflammatory response in macrophages by favoring the production of proinflammatory cytokines. In human, negatively regulates T-cell proliferation compared with stromal cells where it increases proliferation (PubMed:21466550).</text>
</comment>
<comment type="subunit">
    <text evidence="1">Interacts with PDGFRA; this interaction promotes PDGF receptor signaling pathway. Interacts with integrin beta-1/ITGB1. Interacts with insulin receptor/INSR; this interaction diminishes INSR autophosphorylation.</text>
</comment>
<comment type="interaction">
    <interactant intactId="EBI-9680942">
        <id>Q9HCU0</id>
    </interactant>
    <interactant intactId="EBI-10988864">
        <id>P46379-2</id>
        <label>BAG6</label>
    </interactant>
    <organismsDiffer>false</organismsDiffer>
    <experiments>3</experiments>
</comment>
<comment type="interaction">
    <interactant intactId="EBI-9680942">
        <id>Q9HCU0</id>
    </interactant>
    <interactant intactId="EBI-6398041">
        <id>Q9UMF0</id>
        <label>ICAM5</label>
    </interactant>
    <organismsDiffer>false</organismsDiffer>
    <experiments>3</experiments>
</comment>
<comment type="interaction">
    <interactant intactId="EBI-9680942">
        <id>Q9HCU0</id>
    </interactant>
    <interactant intactId="EBI-948266">
        <id>O14901</id>
        <label>KLF11</label>
    </interactant>
    <organismsDiffer>false</organismsDiffer>
    <experiments>3</experiments>
</comment>
<comment type="interaction">
    <interactant intactId="EBI-9680942">
        <id>Q9HCU0</id>
    </interactant>
    <interactant intactId="EBI-4314821">
        <id>Q13449</id>
        <label>LSAMP</label>
    </interactant>
    <organismsDiffer>false</organismsDiffer>
    <experiments>3</experiments>
</comment>
<comment type="interaction">
    <interactant intactId="EBI-9680942">
        <id>Q9HCU0</id>
    </interactant>
    <interactant intactId="EBI-73995">
        <id>P27361</id>
        <label>MAPK3</label>
    </interactant>
    <organismsDiffer>false</organismsDiffer>
    <experiments>3</experiments>
</comment>
<comment type="subcellular location">
    <subcellularLocation>
        <location evidence="16">Membrane</location>
        <topology evidence="16">Single-pass type I membrane protein</topology>
    </subcellularLocation>
</comment>
<comment type="alternative products">
    <event type="alternative splicing"/>
    <isoform>
        <id>Q9HCU0-1</id>
        <name>1</name>
        <sequence type="displayed"/>
    </isoform>
    <isoform>
        <id>Q9HCU0-2</id>
        <name>2</name>
        <sequence type="described" ref="VSP_017087"/>
    </isoform>
</comment>
<comment type="tissue specificity">
    <text evidence="5 6 7 9 10 12 13">Expressed in tumor endothelial cells but absent or barely detectable in normal endothelial cells. Expressed in metastatic lesions of the liver and during angiogenesis of corpus luteum formation and wound healing. Expressed in vascular endothelial cells of malignant tumors but not in normal blood vessels. Expressed in stromal fibroblasts. Strongly expressed in pericytes (PubMed:20484976). Expressed on stromal cells and cells with lymphoid morphology such a T-cells (PubMed:21466550).</text>
</comment>
<comment type="PTM">
    <text evidence="7">O-glycosylated with sialylated oligosaccharides.</text>
</comment>
<comment type="PTM">
    <text evidence="7">May be N-glycosylated.</text>
</comment>
<comment type="online information" name="Atlas of Genetics and Cytogenetics in Oncology and Haematology">
    <link uri="https://atlasgeneticsoncology.org/gene/968/CD248"/>
</comment>
<comment type="online information" name="Functional Glycomics Gateway - Glycan Binding">
    <link uri="http://www.functionalglycomics.org/glycomics/GBPServlet?&amp;operationType=view&amp;cbpId=cbp_hum_Ctlect_210"/>
    <text>Endosialin</text>
</comment>
<protein>
    <recommendedName>
        <fullName>Endosialin</fullName>
    </recommendedName>
    <alternativeName>
        <fullName>Tumor endothelial marker 1</fullName>
    </alternativeName>
    <cdAntigenName>CD248</cdAntigenName>
</protein>
<name>CD248_HUMAN</name>
<proteinExistence type="evidence at protein level"/>
<gene>
    <name type="primary">CD248</name>
    <name type="synonym">CD164L1</name>
    <name type="synonym">TEM1</name>
</gene>
<keyword id="KW-0025">Alternative splicing</keyword>
<keyword id="KW-0106">Calcium</keyword>
<keyword id="KW-1015">Disulfide bond</keyword>
<keyword id="KW-0245">EGF-like domain</keyword>
<keyword id="KW-0325">Glycoprotein</keyword>
<keyword id="KW-0430">Lectin</keyword>
<keyword id="KW-0472">Membrane</keyword>
<keyword id="KW-0597">Phosphoprotein</keyword>
<keyword id="KW-1267">Proteomics identification</keyword>
<keyword id="KW-1185">Reference proteome</keyword>
<keyword id="KW-0732">Signal</keyword>
<keyword id="KW-0812">Transmembrane</keyword>
<keyword id="KW-1133">Transmembrane helix</keyword>
<reference key="1">
    <citation type="journal article" date="2000" name="Science">
        <title>Genes expressed in human tumor endothelium.</title>
        <authorList>
            <person name="St Croix B."/>
            <person name="Rago C."/>
            <person name="Velculescu V.E."/>
            <person name="Traverso G."/>
            <person name="Romans K.E."/>
            <person name="Montgomery E."/>
            <person name="Lal A."/>
            <person name="Riggins G.J."/>
            <person name="Lengauer C."/>
            <person name="Vogelstein B."/>
            <person name="Kinzler K.W."/>
        </authorList>
    </citation>
    <scope>NUCLEOTIDE SEQUENCE [MRNA] (ISOFORM 1)</scope>
    <scope>TISSUE SPECIFICITY</scope>
</reference>
<reference key="2">
    <citation type="journal article" date="2001" name="J. Biol. Chem.">
        <title>Molecular cloning and characterization of endosialin, a C-type lectin-like cell surface receptor of tumor endothelium.</title>
        <authorList>
            <person name="Christian S."/>
            <person name="Ahorn H."/>
            <person name="Koehler A."/>
            <person name="Eisenhaber F."/>
            <person name="Rodi H.P."/>
            <person name="Garin-Chesa P."/>
            <person name="Park J.E."/>
            <person name="Rettig W.J."/>
            <person name="Lenter M.C."/>
        </authorList>
    </citation>
    <scope>NUCLEOTIDE SEQUENCE [MRNA] (ISOFORM 1)</scope>
    <scope>TISSUE SPECIFICITY</scope>
</reference>
<reference key="3">
    <citation type="journal article" date="2004" name="Nat. Genet.">
        <title>Complete sequencing and characterization of 21,243 full-length human cDNAs.</title>
        <authorList>
            <person name="Ota T."/>
            <person name="Suzuki Y."/>
            <person name="Nishikawa T."/>
            <person name="Otsuki T."/>
            <person name="Sugiyama T."/>
            <person name="Irie R."/>
            <person name="Wakamatsu A."/>
            <person name="Hayashi K."/>
            <person name="Sato H."/>
            <person name="Nagai K."/>
            <person name="Kimura K."/>
            <person name="Makita H."/>
            <person name="Sekine M."/>
            <person name="Obayashi M."/>
            <person name="Nishi T."/>
            <person name="Shibahara T."/>
            <person name="Tanaka T."/>
            <person name="Ishii S."/>
            <person name="Yamamoto J."/>
            <person name="Saito K."/>
            <person name="Kawai Y."/>
            <person name="Isono Y."/>
            <person name="Nakamura Y."/>
            <person name="Nagahari K."/>
            <person name="Murakami K."/>
            <person name="Yasuda T."/>
            <person name="Iwayanagi T."/>
            <person name="Wagatsuma M."/>
            <person name="Shiratori A."/>
            <person name="Sudo H."/>
            <person name="Hosoiri T."/>
            <person name="Kaku Y."/>
            <person name="Kodaira H."/>
            <person name="Kondo H."/>
            <person name="Sugawara M."/>
            <person name="Takahashi M."/>
            <person name="Kanda K."/>
            <person name="Yokoi T."/>
            <person name="Furuya T."/>
            <person name="Kikkawa E."/>
            <person name="Omura Y."/>
            <person name="Abe K."/>
            <person name="Kamihara K."/>
            <person name="Katsuta N."/>
            <person name="Sato K."/>
            <person name="Tanikawa M."/>
            <person name="Yamazaki M."/>
            <person name="Ninomiya K."/>
            <person name="Ishibashi T."/>
            <person name="Yamashita H."/>
            <person name="Murakawa K."/>
            <person name="Fujimori K."/>
            <person name="Tanai H."/>
            <person name="Kimata M."/>
            <person name="Watanabe M."/>
            <person name="Hiraoka S."/>
            <person name="Chiba Y."/>
            <person name="Ishida S."/>
            <person name="Ono Y."/>
            <person name="Takiguchi S."/>
            <person name="Watanabe S."/>
            <person name="Yosida M."/>
            <person name="Hotuta T."/>
            <person name="Kusano J."/>
            <person name="Kanehori K."/>
            <person name="Takahashi-Fujii A."/>
            <person name="Hara H."/>
            <person name="Tanase T.-O."/>
            <person name="Nomura Y."/>
            <person name="Togiya S."/>
            <person name="Komai F."/>
            <person name="Hara R."/>
            <person name="Takeuchi K."/>
            <person name="Arita M."/>
            <person name="Imose N."/>
            <person name="Musashino K."/>
            <person name="Yuuki H."/>
            <person name="Oshima A."/>
            <person name="Sasaki N."/>
            <person name="Aotsuka S."/>
            <person name="Yoshikawa Y."/>
            <person name="Matsunawa H."/>
            <person name="Ichihara T."/>
            <person name="Shiohata N."/>
            <person name="Sano S."/>
            <person name="Moriya S."/>
            <person name="Momiyama H."/>
            <person name="Satoh N."/>
            <person name="Takami S."/>
            <person name="Terashima Y."/>
            <person name="Suzuki O."/>
            <person name="Nakagawa S."/>
            <person name="Senoh A."/>
            <person name="Mizoguchi H."/>
            <person name="Goto Y."/>
            <person name="Shimizu F."/>
            <person name="Wakebe H."/>
            <person name="Hishigaki H."/>
            <person name="Watanabe T."/>
            <person name="Sugiyama A."/>
            <person name="Takemoto M."/>
            <person name="Kawakami B."/>
            <person name="Yamazaki M."/>
            <person name="Watanabe K."/>
            <person name="Kumagai A."/>
            <person name="Itakura S."/>
            <person name="Fukuzumi Y."/>
            <person name="Fujimori Y."/>
            <person name="Komiyama M."/>
            <person name="Tashiro H."/>
            <person name="Tanigami A."/>
            <person name="Fujiwara T."/>
            <person name="Ono T."/>
            <person name="Yamada K."/>
            <person name="Fujii Y."/>
            <person name="Ozaki K."/>
            <person name="Hirao M."/>
            <person name="Ohmori Y."/>
            <person name="Kawabata A."/>
            <person name="Hikiji T."/>
            <person name="Kobatake N."/>
            <person name="Inagaki H."/>
            <person name="Ikema Y."/>
            <person name="Okamoto S."/>
            <person name="Okitani R."/>
            <person name="Kawakami T."/>
            <person name="Noguchi S."/>
            <person name="Itoh T."/>
            <person name="Shigeta K."/>
            <person name="Senba T."/>
            <person name="Matsumura K."/>
            <person name="Nakajima Y."/>
            <person name="Mizuno T."/>
            <person name="Morinaga M."/>
            <person name="Sasaki M."/>
            <person name="Togashi T."/>
            <person name="Oyama M."/>
            <person name="Hata H."/>
            <person name="Watanabe M."/>
            <person name="Komatsu T."/>
            <person name="Mizushima-Sugano J."/>
            <person name="Satoh T."/>
            <person name="Shirai Y."/>
            <person name="Takahashi Y."/>
            <person name="Nakagawa K."/>
            <person name="Okumura K."/>
            <person name="Nagase T."/>
            <person name="Nomura N."/>
            <person name="Kikuchi H."/>
            <person name="Masuho Y."/>
            <person name="Yamashita R."/>
            <person name="Nakai K."/>
            <person name="Yada T."/>
            <person name="Nakamura Y."/>
            <person name="Ohara O."/>
            <person name="Isogai T."/>
            <person name="Sugano S."/>
        </authorList>
    </citation>
    <scope>NUCLEOTIDE SEQUENCE [LARGE SCALE MRNA] (ISOFORM 2)</scope>
    <source>
        <tissue>Embryo</tissue>
    </source>
</reference>
<reference key="4">
    <citation type="journal article" date="2004" name="Genome Res.">
        <title>The status, quality, and expansion of the NIH full-length cDNA project: the Mammalian Gene Collection (MGC).</title>
        <authorList>
            <consortium name="The MGC Project Team"/>
        </authorList>
    </citation>
    <scope>NUCLEOTIDE SEQUENCE [LARGE SCALE MRNA] (ISOFORM 1)</scope>
    <scope>VARIANT ARG-457</scope>
    <source>
        <tissue>Brain</tissue>
    </source>
</reference>
<reference key="5">
    <citation type="journal article" date="1992" name="Proc. Natl. Acad. Sci. U.S.A.">
        <title>Identification of endosialin, a cell surface glycoprotein of vascular endothelial cells in human cancer.</title>
        <authorList>
            <person name="Rettig W.J."/>
            <person name="Garin-Chesa P."/>
            <person name="Healey J.H."/>
            <person name="Su S.L."/>
            <person name="Jaffe E.A."/>
            <person name="Old L.J."/>
        </authorList>
    </citation>
    <scope>TISSUE SPECIFICITY</scope>
    <scope>GLYCOSYLATION</scope>
</reference>
<reference key="6">
    <citation type="journal article" date="2005" name="Cancer Immun.">
        <title>Characterization of cancer stroma markers: in silico analysis of an mRNA expression database for fibroblast activation protein and endosialin.</title>
        <authorList>
            <person name="Dolznig H."/>
            <person name="Schweifer N."/>
            <person name="Puri C."/>
            <person name="Kraut N."/>
            <person name="Rettig W.J."/>
            <person name="Kerjaschki D."/>
            <person name="Garin-Chesa P."/>
        </authorList>
    </citation>
    <scope>TISSUE SPECIFICITY</scope>
</reference>
<reference key="7">
    <citation type="journal article" date="2005" name="FEBS Lett.">
        <title>Endosialin (TEM1, CD248) is a marker of stromal fibroblasts and is not selectively expressed on tumour endothelium.</title>
        <authorList>
            <person name="MacFadyen J.R."/>
            <person name="Haworth O."/>
            <person name="Roberston D."/>
            <person name="Hardie D."/>
            <person name="Webster M.T."/>
            <person name="Morris H.R."/>
            <person name="Panico M."/>
            <person name="Sutton-Smith M."/>
            <person name="Dell A."/>
            <person name="van der Geer P."/>
            <person name="Wienke D."/>
            <person name="Buckley C.D."/>
            <person name="Isacke C.M."/>
        </authorList>
    </citation>
    <scope>FUNCTION</scope>
    <scope>TISSUE SPECIFICITY</scope>
</reference>
<reference key="8">
    <citation type="journal article" date="2010" name="Cancer Biol. Ther.">
        <title>Endosialin/TEM-1/CD248 regulates pericyte proliferation through PDGF receptor signaling.</title>
        <authorList>
            <person name="Tomkowicz B."/>
            <person name="Rybinski K."/>
            <person name="Sebeck D."/>
            <person name="Sass P."/>
            <person name="Nicolaides N.C."/>
            <person name="Grasso L."/>
            <person name="Zhou Y."/>
        </authorList>
    </citation>
    <scope>FUNCTION</scope>
    <scope>TISSUE SPECIFICITY</scope>
</reference>
<reference key="9">
    <citation type="journal article" date="2011" name="Immunology">
        <title>The stromal cell antigen CD248 (endosialin) is expressed on naive CD8+ human T cells and regulates proliferation.</title>
        <authorList>
            <person name="Hardie D.L."/>
            <person name="Baldwin M.J."/>
            <person name="Naylor A."/>
            <person name="Haworth O.J."/>
            <person name="Hou T.Z."/>
            <person name="Lax S."/>
            <person name="Curnow S.J."/>
            <person name="Willcox N."/>
            <person name="MacFadyen J."/>
            <person name="Isacke C.M."/>
            <person name="Buckley C.D."/>
        </authorList>
    </citation>
    <scope>FUNCTION</scope>
    <scope>TISSUE SPECIFICITY</scope>
</reference>
<reference key="10">
    <citation type="journal article" date="2014" name="J. Proteomics">
        <title>An enzyme assisted RP-RPLC approach for in-depth analysis of human liver phosphoproteome.</title>
        <authorList>
            <person name="Bian Y."/>
            <person name="Song C."/>
            <person name="Cheng K."/>
            <person name="Dong M."/>
            <person name="Wang F."/>
            <person name="Huang J."/>
            <person name="Sun D."/>
            <person name="Wang L."/>
            <person name="Ye M."/>
            <person name="Zou H."/>
        </authorList>
    </citation>
    <scope>PHOSPHORYLATION [LARGE SCALE ANALYSIS] AT SER-746</scope>
    <scope>IDENTIFICATION BY MASS SPECTROMETRY [LARGE SCALE ANALYSIS]</scope>
    <source>
        <tissue>Liver</tissue>
    </source>
</reference>
<reference key="11">
    <citation type="journal article" date="2017" name="Oncogene">
        <title>Multimerin-2 is a ligand for group 14 family C-type lectins CLEC14A, CD93 and CD248 spanning the endothelial pericyte interface.</title>
        <authorList>
            <person name="Khan K.A."/>
            <person name="Naylor A.J."/>
            <person name="Khan A."/>
            <person name="Noy P.J."/>
            <person name="Mambretti M."/>
            <person name="Lodhia P."/>
            <person name="Athwal J."/>
            <person name="Korzystka A."/>
            <person name="Buckley C.D."/>
            <person name="Willcox B.E."/>
            <person name="Mohammed F."/>
            <person name="Bicknell R."/>
        </authorList>
    </citation>
    <scope>INTERACTION WITH MMRN2</scope>
    <scope>FUNCTION</scope>
</reference>
<reference key="12">
    <citation type="journal article" date="2006" name="Science">
        <title>The consensus coding sequences of human breast and colorectal cancers.</title>
        <authorList>
            <person name="Sjoeblom T."/>
            <person name="Jones S."/>
            <person name="Wood L.D."/>
            <person name="Parsons D.W."/>
            <person name="Lin J."/>
            <person name="Barber T.D."/>
            <person name="Mandelker D."/>
            <person name="Leary R.J."/>
            <person name="Ptak J."/>
            <person name="Silliman N."/>
            <person name="Szabo S."/>
            <person name="Buckhaults P."/>
            <person name="Farrell C."/>
            <person name="Meeh P."/>
            <person name="Markowitz S.D."/>
            <person name="Willis J."/>
            <person name="Dawson D."/>
            <person name="Willson J.K.V."/>
            <person name="Gazdar A.F."/>
            <person name="Hartigan J."/>
            <person name="Wu L."/>
            <person name="Liu C."/>
            <person name="Parmigiani G."/>
            <person name="Park B.H."/>
            <person name="Bachman K.E."/>
            <person name="Papadopoulos N."/>
            <person name="Vogelstein B."/>
            <person name="Kinzler K.W."/>
            <person name="Velculescu V.E."/>
        </authorList>
    </citation>
    <scope>VARIANT [LARGE SCALE ANALYSIS] PHE-6</scope>
</reference>
<organism>
    <name type="scientific">Homo sapiens</name>
    <name type="common">Human</name>
    <dbReference type="NCBI Taxonomy" id="9606"/>
    <lineage>
        <taxon>Eukaryota</taxon>
        <taxon>Metazoa</taxon>
        <taxon>Chordata</taxon>
        <taxon>Craniata</taxon>
        <taxon>Vertebrata</taxon>
        <taxon>Euteleostomi</taxon>
        <taxon>Mammalia</taxon>
        <taxon>Eutheria</taxon>
        <taxon>Euarchontoglires</taxon>
        <taxon>Primates</taxon>
        <taxon>Haplorrhini</taxon>
        <taxon>Catarrhini</taxon>
        <taxon>Hominidae</taxon>
        <taxon>Homo</taxon>
    </lineage>
</organism>
<dbReference type="EMBL" id="AF279142">
    <property type="protein sequence ID" value="AAG00867.1"/>
    <property type="molecule type" value="mRNA"/>
</dbReference>
<dbReference type="EMBL" id="AJ295846">
    <property type="protein sequence ID" value="CAC34381.1"/>
    <property type="molecule type" value="mRNA"/>
</dbReference>
<dbReference type="EMBL" id="AK027290">
    <property type="protein sequence ID" value="BAB55018.1"/>
    <property type="molecule type" value="mRNA"/>
</dbReference>
<dbReference type="EMBL" id="BC051340">
    <property type="protein sequence ID" value="AAH51340.1"/>
    <property type="molecule type" value="mRNA"/>
</dbReference>
<dbReference type="EMBL" id="BC104484">
    <property type="protein sequence ID" value="AAI04485.1"/>
    <property type="molecule type" value="mRNA"/>
</dbReference>
<dbReference type="EMBL" id="BC105633">
    <property type="protein sequence ID" value="AAI05634.1"/>
    <property type="molecule type" value="mRNA"/>
</dbReference>
<dbReference type="CCDS" id="CCDS8134.1">
    <molecule id="Q9HCU0-1"/>
</dbReference>
<dbReference type="RefSeq" id="NP_065137.1">
    <molecule id="Q9HCU0-1"/>
    <property type="nucleotide sequence ID" value="NM_020404.3"/>
</dbReference>
<dbReference type="SMR" id="Q9HCU0"/>
<dbReference type="BioGRID" id="121387">
    <property type="interactions" value="3"/>
</dbReference>
<dbReference type="FunCoup" id="Q9HCU0">
    <property type="interactions" value="49"/>
</dbReference>
<dbReference type="IntAct" id="Q9HCU0">
    <property type="interactions" value="7"/>
</dbReference>
<dbReference type="MINT" id="Q9HCU0"/>
<dbReference type="STRING" id="9606.ENSP00000308117"/>
<dbReference type="ChEMBL" id="CHEMBL3712975"/>
<dbReference type="GlyCosmos" id="Q9HCU0">
    <property type="glycosylation" value="34 sites, 4 glycans"/>
</dbReference>
<dbReference type="GlyGen" id="Q9HCU0">
    <property type="glycosylation" value="36 sites, 5 O-linked glycans (17 sites)"/>
</dbReference>
<dbReference type="iPTMnet" id="Q9HCU0"/>
<dbReference type="PhosphoSitePlus" id="Q9HCU0"/>
<dbReference type="BioMuta" id="CD248"/>
<dbReference type="DMDM" id="74752810"/>
<dbReference type="jPOST" id="Q9HCU0"/>
<dbReference type="MassIVE" id="Q9HCU0"/>
<dbReference type="PaxDb" id="9606-ENSP00000308117"/>
<dbReference type="PeptideAtlas" id="Q9HCU0"/>
<dbReference type="ProteomicsDB" id="81798">
    <molecule id="Q9HCU0-1"/>
</dbReference>
<dbReference type="ProteomicsDB" id="81799">
    <molecule id="Q9HCU0-2"/>
</dbReference>
<dbReference type="ABCD" id="Q9HCU0">
    <property type="antibodies" value="2 sequenced antibodies"/>
</dbReference>
<dbReference type="Antibodypedia" id="30126">
    <property type="antibodies" value="404 antibodies from 39 providers"/>
</dbReference>
<dbReference type="DNASU" id="57124"/>
<dbReference type="Ensembl" id="ENST00000311330.4">
    <molecule id="Q9HCU0-1"/>
    <property type="protein sequence ID" value="ENSP00000308117.3"/>
    <property type="gene ID" value="ENSG00000174807.4"/>
</dbReference>
<dbReference type="GeneID" id="57124"/>
<dbReference type="KEGG" id="hsa:57124"/>
<dbReference type="MANE-Select" id="ENST00000311330.4">
    <property type="protein sequence ID" value="ENSP00000308117.3"/>
    <property type="RefSeq nucleotide sequence ID" value="NM_020404.3"/>
    <property type="RefSeq protein sequence ID" value="NP_065137.1"/>
</dbReference>
<dbReference type="UCSC" id="uc001ohm.1">
    <molecule id="Q9HCU0-1"/>
    <property type="organism name" value="human"/>
</dbReference>
<dbReference type="AGR" id="HGNC:18219"/>
<dbReference type="CTD" id="57124"/>
<dbReference type="DisGeNET" id="57124"/>
<dbReference type="GeneCards" id="CD248"/>
<dbReference type="HGNC" id="HGNC:18219">
    <property type="gene designation" value="CD248"/>
</dbReference>
<dbReference type="HPA" id="ENSG00000174807">
    <property type="expression patterns" value="Tissue enhanced (adipose tissue, breast)"/>
</dbReference>
<dbReference type="MIM" id="606064">
    <property type="type" value="gene"/>
</dbReference>
<dbReference type="neXtProt" id="NX_Q9HCU0"/>
<dbReference type="OpenTargets" id="ENSG00000174807"/>
<dbReference type="PharmGKB" id="PA134864533"/>
<dbReference type="VEuPathDB" id="HostDB:ENSG00000174807"/>
<dbReference type="eggNOG" id="ENOG502QQKI">
    <property type="taxonomic scope" value="Eukaryota"/>
</dbReference>
<dbReference type="GeneTree" id="ENSGT00940000162405"/>
<dbReference type="HOGENOM" id="CLU_027075_0_0_1"/>
<dbReference type="InParanoid" id="Q9HCU0"/>
<dbReference type="OMA" id="APNKRIT"/>
<dbReference type="OrthoDB" id="10045365at2759"/>
<dbReference type="PAN-GO" id="Q9HCU0">
    <property type="GO annotations" value="4 GO annotations based on evolutionary models"/>
</dbReference>
<dbReference type="PhylomeDB" id="Q9HCU0"/>
<dbReference type="TreeFam" id="TF330714"/>
<dbReference type="PathwayCommons" id="Q9HCU0"/>
<dbReference type="SignaLink" id="Q9HCU0"/>
<dbReference type="BioGRID-ORCS" id="57124">
    <property type="hits" value="10 hits in 1138 CRISPR screens"/>
</dbReference>
<dbReference type="ChiTaRS" id="CD248">
    <property type="organism name" value="human"/>
</dbReference>
<dbReference type="GeneWiki" id="CD248"/>
<dbReference type="GenomeRNAi" id="57124"/>
<dbReference type="Pharos" id="Q9HCU0">
    <property type="development level" value="Tbio"/>
</dbReference>
<dbReference type="PRO" id="PR:Q9HCU0"/>
<dbReference type="Proteomes" id="UP000005640">
    <property type="component" value="Chromosome 11"/>
</dbReference>
<dbReference type="RNAct" id="Q9HCU0">
    <property type="molecule type" value="protein"/>
</dbReference>
<dbReference type="Bgee" id="ENSG00000174807">
    <property type="expression patterns" value="Expressed in decidua and 170 other cell types or tissues"/>
</dbReference>
<dbReference type="GO" id="GO:0005737">
    <property type="term" value="C:cytoplasm"/>
    <property type="evidence" value="ECO:0007669"/>
    <property type="project" value="Ensembl"/>
</dbReference>
<dbReference type="GO" id="GO:0009897">
    <property type="term" value="C:external side of plasma membrane"/>
    <property type="evidence" value="ECO:0000318"/>
    <property type="project" value="GO_Central"/>
</dbReference>
<dbReference type="GO" id="GO:0070062">
    <property type="term" value="C:extracellular exosome"/>
    <property type="evidence" value="ECO:0007005"/>
    <property type="project" value="UniProtKB"/>
</dbReference>
<dbReference type="GO" id="GO:0031012">
    <property type="term" value="C:extracellular matrix"/>
    <property type="evidence" value="ECO:0000304"/>
    <property type="project" value="UniProtKB"/>
</dbReference>
<dbReference type="GO" id="GO:0005509">
    <property type="term" value="F:calcium ion binding"/>
    <property type="evidence" value="ECO:0007669"/>
    <property type="project" value="InterPro"/>
</dbReference>
<dbReference type="GO" id="GO:0030246">
    <property type="term" value="F:carbohydrate binding"/>
    <property type="evidence" value="ECO:0007669"/>
    <property type="project" value="UniProtKB-KW"/>
</dbReference>
<dbReference type="GO" id="GO:0050840">
    <property type="term" value="F:extracellular matrix binding"/>
    <property type="evidence" value="ECO:0000318"/>
    <property type="project" value="GO_Central"/>
</dbReference>
<dbReference type="GO" id="GO:1990430">
    <property type="term" value="F:extracellular matrix protein binding"/>
    <property type="evidence" value="ECO:0000318"/>
    <property type="project" value="GO_Central"/>
</dbReference>
<dbReference type="GO" id="GO:0060033">
    <property type="term" value="P:anatomical structure regression"/>
    <property type="evidence" value="ECO:0007669"/>
    <property type="project" value="Ensembl"/>
</dbReference>
<dbReference type="GO" id="GO:0016477">
    <property type="term" value="P:cell migration"/>
    <property type="evidence" value="ECO:0000318"/>
    <property type="project" value="GO_Central"/>
</dbReference>
<dbReference type="GO" id="GO:0072577">
    <property type="term" value="P:endothelial cell apoptotic process"/>
    <property type="evidence" value="ECO:0007669"/>
    <property type="project" value="Ensembl"/>
</dbReference>
<dbReference type="GO" id="GO:0010761">
    <property type="term" value="P:fibroblast migration"/>
    <property type="evidence" value="ECO:0007669"/>
    <property type="project" value="Ensembl"/>
</dbReference>
<dbReference type="GO" id="GO:0048144">
    <property type="term" value="P:fibroblast proliferation"/>
    <property type="evidence" value="ECO:0007669"/>
    <property type="project" value="Ensembl"/>
</dbReference>
<dbReference type="GO" id="GO:0048535">
    <property type="term" value="P:lymph node development"/>
    <property type="evidence" value="ECO:0007669"/>
    <property type="project" value="Ensembl"/>
</dbReference>
<dbReference type="GO" id="GO:2000353">
    <property type="term" value="P:positive regulation of endothelial cell apoptotic process"/>
    <property type="evidence" value="ECO:0007669"/>
    <property type="project" value="Ensembl"/>
</dbReference>
<dbReference type="GO" id="GO:0048146">
    <property type="term" value="P:positive regulation of fibroblast proliferation"/>
    <property type="evidence" value="ECO:0007669"/>
    <property type="project" value="Ensembl"/>
</dbReference>
<dbReference type="CDD" id="cd03600">
    <property type="entry name" value="CLECT_thrombomodulin_like"/>
    <property type="match status" value="1"/>
</dbReference>
<dbReference type="CDD" id="cd00054">
    <property type="entry name" value="EGF_CA"/>
    <property type="match status" value="1"/>
</dbReference>
<dbReference type="CDD" id="cd19941">
    <property type="entry name" value="TIL"/>
    <property type="match status" value="1"/>
</dbReference>
<dbReference type="FunFam" id="2.10.25.10:FF:000406">
    <property type="entry name" value="CD248 molecule"/>
    <property type="match status" value="1"/>
</dbReference>
<dbReference type="FunFam" id="2.10.25.10:FF:000489">
    <property type="entry name" value="CD248 molecule"/>
    <property type="match status" value="1"/>
</dbReference>
<dbReference type="FunFam" id="3.10.100.10:FF:000061">
    <property type="entry name" value="CD248 molecule"/>
    <property type="match status" value="1"/>
</dbReference>
<dbReference type="Gene3D" id="2.10.25.10">
    <property type="entry name" value="Laminin"/>
    <property type="match status" value="3"/>
</dbReference>
<dbReference type="Gene3D" id="3.10.100.10">
    <property type="entry name" value="Mannose-Binding Protein A, subunit A"/>
    <property type="match status" value="1"/>
</dbReference>
<dbReference type="InterPro" id="IPR001304">
    <property type="entry name" value="C-type_lectin-like"/>
</dbReference>
<dbReference type="InterPro" id="IPR016186">
    <property type="entry name" value="C-type_lectin-like/link_sf"/>
</dbReference>
<dbReference type="InterPro" id="IPR051505">
    <property type="entry name" value="C-type_lectin_domain"/>
</dbReference>
<dbReference type="InterPro" id="IPR016187">
    <property type="entry name" value="CTDL_fold"/>
</dbReference>
<dbReference type="InterPro" id="IPR001881">
    <property type="entry name" value="EGF-like_Ca-bd_dom"/>
</dbReference>
<dbReference type="InterPro" id="IPR000742">
    <property type="entry name" value="EGF-like_dom"/>
</dbReference>
<dbReference type="InterPro" id="IPR018097">
    <property type="entry name" value="EGF_Ca-bd_CS"/>
</dbReference>
<dbReference type="InterPro" id="IPR009030">
    <property type="entry name" value="Growth_fac_rcpt_cys_sf"/>
</dbReference>
<dbReference type="PANTHER" id="PTHR14789">
    <property type="entry name" value="CHONDROLECTIN VARIANT CHODLFDELTAE"/>
    <property type="match status" value="1"/>
</dbReference>
<dbReference type="PANTHER" id="PTHR14789:SF4">
    <property type="entry name" value="ENDOSIALIN"/>
    <property type="match status" value="1"/>
</dbReference>
<dbReference type="Pfam" id="PF14670">
    <property type="entry name" value="FXa_inhibition"/>
    <property type="match status" value="1"/>
</dbReference>
<dbReference type="Pfam" id="PF00059">
    <property type="entry name" value="Lectin_C"/>
    <property type="match status" value="1"/>
</dbReference>
<dbReference type="Pfam" id="PF25444">
    <property type="entry name" value="THBD"/>
    <property type="match status" value="1"/>
</dbReference>
<dbReference type="SMART" id="SM00034">
    <property type="entry name" value="CLECT"/>
    <property type="match status" value="1"/>
</dbReference>
<dbReference type="SMART" id="SM00181">
    <property type="entry name" value="EGF"/>
    <property type="match status" value="3"/>
</dbReference>
<dbReference type="SMART" id="SM00179">
    <property type="entry name" value="EGF_CA"/>
    <property type="match status" value="2"/>
</dbReference>
<dbReference type="SUPFAM" id="SSF56436">
    <property type="entry name" value="C-type lectin-like"/>
    <property type="match status" value="1"/>
</dbReference>
<dbReference type="SUPFAM" id="SSF57184">
    <property type="entry name" value="Growth factor receptor domain"/>
    <property type="match status" value="1"/>
</dbReference>
<dbReference type="PROSITE" id="PS50041">
    <property type="entry name" value="C_TYPE_LECTIN_2"/>
    <property type="match status" value="1"/>
</dbReference>
<dbReference type="PROSITE" id="PS01186">
    <property type="entry name" value="EGF_2"/>
    <property type="match status" value="1"/>
</dbReference>
<dbReference type="PROSITE" id="PS01187">
    <property type="entry name" value="EGF_CA"/>
    <property type="match status" value="1"/>
</dbReference>